<name>PP2A4_ORYSJ</name>
<evidence type="ECO:0000250" key="1"/>
<evidence type="ECO:0000305" key="2"/>
<evidence type="ECO:0000312" key="3">
    <source>
        <dbReference type="EMBL" id="EEE50943.1"/>
    </source>
</evidence>
<accession>A3C4N5</accession>
<accession>B7EPC1</accession>
<accession>Q0IXS3</accession>
<accession>Q338E3</accession>
<accession>Q9SBW3</accession>
<comment type="catalytic activity">
    <reaction>
        <text>O-phospho-L-seryl-[protein] + H2O = L-seryl-[protein] + phosphate</text>
        <dbReference type="Rhea" id="RHEA:20629"/>
        <dbReference type="Rhea" id="RHEA-COMP:9863"/>
        <dbReference type="Rhea" id="RHEA-COMP:11604"/>
        <dbReference type="ChEBI" id="CHEBI:15377"/>
        <dbReference type="ChEBI" id="CHEBI:29999"/>
        <dbReference type="ChEBI" id="CHEBI:43474"/>
        <dbReference type="ChEBI" id="CHEBI:83421"/>
        <dbReference type="EC" id="3.1.3.16"/>
    </reaction>
</comment>
<comment type="catalytic activity">
    <reaction>
        <text>O-phospho-L-threonyl-[protein] + H2O = L-threonyl-[protein] + phosphate</text>
        <dbReference type="Rhea" id="RHEA:47004"/>
        <dbReference type="Rhea" id="RHEA-COMP:11060"/>
        <dbReference type="Rhea" id="RHEA-COMP:11605"/>
        <dbReference type="ChEBI" id="CHEBI:15377"/>
        <dbReference type="ChEBI" id="CHEBI:30013"/>
        <dbReference type="ChEBI" id="CHEBI:43474"/>
        <dbReference type="ChEBI" id="CHEBI:61977"/>
        <dbReference type="EC" id="3.1.3.16"/>
    </reaction>
</comment>
<comment type="cofactor">
    <cofactor evidence="1">
        <name>Mn(2+)</name>
        <dbReference type="ChEBI" id="CHEBI:29035"/>
    </cofactor>
    <text evidence="1">Binds 2 manganese ions per subunit.</text>
</comment>
<comment type="subcellular location">
    <subcellularLocation>
        <location evidence="1">Cytoplasm</location>
    </subcellularLocation>
</comment>
<comment type="similarity">
    <text evidence="2">Belongs to the PPP phosphatase family. PP-2A subfamily.</text>
</comment>
<sequence>MEESVGSRGGGGGGLDAQIEQLMECRPLSEPEVKTLCEKAKEILMEESNVQPVKSPVTICGDIHGQFHDLVELFRIGGKCPDTNYLFMGDYVDRGYYSVETVTLLVALKVRYPQRITILRGNHESRQITQVYGFYDECLRKYGSANVWKIFTDLFDYFPLTALVESEIFCLHGGLSPSIDNLDSVRSLDRVQEVPHEGPMCDLLWSDPDDRCGWGISPRGAGYTFGQDISEQFNHTNNLKLVARAHQLVMEGYNWAHEQKVVTIFSAPNYCYRCGNMASILEVDDCRNHTFIQFEPAPRRGEPDVTRRTPDYFL</sequence>
<organism>
    <name type="scientific">Oryza sativa subsp. japonica</name>
    <name type="common">Rice</name>
    <dbReference type="NCBI Taxonomy" id="39947"/>
    <lineage>
        <taxon>Eukaryota</taxon>
        <taxon>Viridiplantae</taxon>
        <taxon>Streptophyta</taxon>
        <taxon>Embryophyta</taxon>
        <taxon>Tracheophyta</taxon>
        <taxon>Spermatophyta</taxon>
        <taxon>Magnoliopsida</taxon>
        <taxon>Liliopsida</taxon>
        <taxon>Poales</taxon>
        <taxon>Poaceae</taxon>
        <taxon>BOP clade</taxon>
        <taxon>Oryzoideae</taxon>
        <taxon>Oryzeae</taxon>
        <taxon>Oryzinae</taxon>
        <taxon>Oryza</taxon>
        <taxon>Oryza sativa</taxon>
    </lineage>
</organism>
<keyword id="KW-0963">Cytoplasm</keyword>
<keyword id="KW-0378">Hydrolase</keyword>
<keyword id="KW-0464">Manganese</keyword>
<keyword id="KW-0479">Metal-binding</keyword>
<keyword id="KW-0904">Protein phosphatase</keyword>
<keyword id="KW-1185">Reference proteome</keyword>
<gene>
    <name type="primary">PP2A4</name>
    <name type="ordered locus">Os10g0410600</name>
    <name type="ordered locus">LOC_Os10g27050</name>
    <name type="ORF">OsJ_030257</name>
    <name evidence="3" type="ORF">OsJ_31490</name>
</gene>
<reference key="1">
    <citation type="journal article" date="2003" name="Science">
        <title>In-depth view of structure, activity, and evolution of rice chromosome 10.</title>
        <authorList>
            <person name="Yu Y."/>
            <person name="Rambo T."/>
            <person name="Currie J."/>
            <person name="Saski C."/>
            <person name="Kim H.-R."/>
            <person name="Collura K."/>
            <person name="Thompson S."/>
            <person name="Simmons J."/>
            <person name="Yang T.-J."/>
            <person name="Nah G."/>
            <person name="Patel A.J."/>
            <person name="Thurmond S."/>
            <person name="Henry D."/>
            <person name="Oates R."/>
            <person name="Palmer M."/>
            <person name="Pries G."/>
            <person name="Gibson J."/>
            <person name="Anderson H."/>
            <person name="Paradkar M."/>
            <person name="Crane L."/>
            <person name="Dale J."/>
            <person name="Carver M.B."/>
            <person name="Wood T."/>
            <person name="Frisch D."/>
            <person name="Engler F."/>
            <person name="Soderlund C."/>
            <person name="Palmer L.E."/>
            <person name="Teytelman L."/>
            <person name="Nascimento L."/>
            <person name="De la Bastide M."/>
            <person name="Spiegel L."/>
            <person name="Ware D."/>
            <person name="O'Shaughnessy A."/>
            <person name="Dike S."/>
            <person name="Dedhia N."/>
            <person name="Preston R."/>
            <person name="Huang E."/>
            <person name="Ferraro K."/>
            <person name="Kuit K."/>
            <person name="Miller B."/>
            <person name="Zutavern T."/>
            <person name="Katzenberger F."/>
            <person name="Muller S."/>
            <person name="Balija V."/>
            <person name="Martienssen R.A."/>
            <person name="Stein L."/>
            <person name="Minx P."/>
            <person name="Johnson D."/>
            <person name="Cordum H."/>
            <person name="Mardis E."/>
            <person name="Cheng Z."/>
            <person name="Jiang J."/>
            <person name="Wilson R."/>
            <person name="McCombie W.R."/>
            <person name="Wing R.A."/>
            <person name="Yuan Q."/>
            <person name="Ouyang S."/>
            <person name="Liu J."/>
            <person name="Jones K.M."/>
            <person name="Gansberger K."/>
            <person name="Moffat K."/>
            <person name="Hill J."/>
            <person name="Tsitrin T."/>
            <person name="Overton L."/>
            <person name="Bera J."/>
            <person name="Kim M."/>
            <person name="Jin S."/>
            <person name="Tallon L."/>
            <person name="Ciecko A."/>
            <person name="Pai G."/>
            <person name="Van Aken S."/>
            <person name="Utterback T."/>
            <person name="Reidmuller S."/>
            <person name="Bormann J."/>
            <person name="Feldblyum T."/>
            <person name="Hsiao J."/>
            <person name="Zismann V."/>
            <person name="Blunt S."/>
            <person name="de Vazeille A.R."/>
            <person name="Shaffer T."/>
            <person name="Koo H."/>
            <person name="Suh B."/>
            <person name="Yang Q."/>
            <person name="Haas B."/>
            <person name="Peterson J."/>
            <person name="Pertea M."/>
            <person name="Volfovsky N."/>
            <person name="Wortman J."/>
            <person name="White O."/>
            <person name="Salzberg S.L."/>
            <person name="Fraser C.M."/>
            <person name="Buell C.R."/>
            <person name="Messing J."/>
            <person name="Song R."/>
            <person name="Fuks G."/>
            <person name="Llaca V."/>
            <person name="Kovchak S."/>
            <person name="Young S."/>
            <person name="Bowers J.E."/>
            <person name="Paterson A.H."/>
            <person name="Johns M.A."/>
            <person name="Mao L."/>
            <person name="Pan H."/>
            <person name="Dean R.A."/>
        </authorList>
    </citation>
    <scope>NUCLEOTIDE SEQUENCE [LARGE SCALE GENOMIC DNA]</scope>
    <source>
        <strain>cv. Nipponbare</strain>
    </source>
</reference>
<reference key="2">
    <citation type="journal article" date="2005" name="Nature">
        <title>The map-based sequence of the rice genome.</title>
        <authorList>
            <consortium name="International rice genome sequencing project (IRGSP)"/>
        </authorList>
    </citation>
    <scope>NUCLEOTIDE SEQUENCE [LARGE SCALE GENOMIC DNA]</scope>
    <source>
        <strain>cv. Nipponbare</strain>
    </source>
</reference>
<reference key="3">
    <citation type="journal article" date="2008" name="Nucleic Acids Res.">
        <title>The rice annotation project database (RAP-DB): 2008 update.</title>
        <authorList>
            <consortium name="The rice annotation project (RAP)"/>
        </authorList>
    </citation>
    <scope>GENOME REANNOTATION</scope>
    <source>
        <strain>cv. Nipponbare</strain>
    </source>
</reference>
<reference key="4">
    <citation type="journal article" date="2013" name="Rice">
        <title>Improvement of the Oryza sativa Nipponbare reference genome using next generation sequence and optical map data.</title>
        <authorList>
            <person name="Kawahara Y."/>
            <person name="de la Bastide M."/>
            <person name="Hamilton J.P."/>
            <person name="Kanamori H."/>
            <person name="McCombie W.R."/>
            <person name="Ouyang S."/>
            <person name="Schwartz D.C."/>
            <person name="Tanaka T."/>
            <person name="Wu J."/>
            <person name="Zhou S."/>
            <person name="Childs K.L."/>
            <person name="Davidson R.M."/>
            <person name="Lin H."/>
            <person name="Quesada-Ocampo L."/>
            <person name="Vaillancourt B."/>
            <person name="Sakai H."/>
            <person name="Lee S.S."/>
            <person name="Kim J."/>
            <person name="Numa H."/>
            <person name="Itoh T."/>
            <person name="Buell C.R."/>
            <person name="Matsumoto T."/>
        </authorList>
    </citation>
    <scope>GENOME REANNOTATION</scope>
    <source>
        <strain>cv. Nipponbare</strain>
    </source>
</reference>
<reference key="5">
    <citation type="journal article" date="2005" name="PLoS Biol.">
        <title>The genomes of Oryza sativa: a history of duplications.</title>
        <authorList>
            <person name="Yu J."/>
            <person name="Wang J."/>
            <person name="Lin W."/>
            <person name="Li S."/>
            <person name="Li H."/>
            <person name="Zhou J."/>
            <person name="Ni P."/>
            <person name="Dong W."/>
            <person name="Hu S."/>
            <person name="Zeng C."/>
            <person name="Zhang J."/>
            <person name="Zhang Y."/>
            <person name="Li R."/>
            <person name="Xu Z."/>
            <person name="Li S."/>
            <person name="Li X."/>
            <person name="Zheng H."/>
            <person name="Cong L."/>
            <person name="Lin L."/>
            <person name="Yin J."/>
            <person name="Geng J."/>
            <person name="Li G."/>
            <person name="Shi J."/>
            <person name="Liu J."/>
            <person name="Lv H."/>
            <person name="Li J."/>
            <person name="Wang J."/>
            <person name="Deng Y."/>
            <person name="Ran L."/>
            <person name="Shi X."/>
            <person name="Wang X."/>
            <person name="Wu Q."/>
            <person name="Li C."/>
            <person name="Ren X."/>
            <person name="Wang J."/>
            <person name="Wang X."/>
            <person name="Li D."/>
            <person name="Liu D."/>
            <person name="Zhang X."/>
            <person name="Ji Z."/>
            <person name="Zhao W."/>
            <person name="Sun Y."/>
            <person name="Zhang Z."/>
            <person name="Bao J."/>
            <person name="Han Y."/>
            <person name="Dong L."/>
            <person name="Ji J."/>
            <person name="Chen P."/>
            <person name="Wu S."/>
            <person name="Liu J."/>
            <person name="Xiao Y."/>
            <person name="Bu D."/>
            <person name="Tan J."/>
            <person name="Yang L."/>
            <person name="Ye C."/>
            <person name="Zhang J."/>
            <person name="Xu J."/>
            <person name="Zhou Y."/>
            <person name="Yu Y."/>
            <person name="Zhang B."/>
            <person name="Zhuang S."/>
            <person name="Wei H."/>
            <person name="Liu B."/>
            <person name="Lei M."/>
            <person name="Yu H."/>
            <person name="Li Y."/>
            <person name="Xu H."/>
            <person name="Wei S."/>
            <person name="He X."/>
            <person name="Fang L."/>
            <person name="Zhang Z."/>
            <person name="Zhang Y."/>
            <person name="Huang X."/>
            <person name="Su Z."/>
            <person name="Tong W."/>
            <person name="Li J."/>
            <person name="Tong Z."/>
            <person name="Li S."/>
            <person name="Ye J."/>
            <person name="Wang L."/>
            <person name="Fang L."/>
            <person name="Lei T."/>
            <person name="Chen C.-S."/>
            <person name="Chen H.-C."/>
            <person name="Xu Z."/>
            <person name="Li H."/>
            <person name="Huang H."/>
            <person name="Zhang F."/>
            <person name="Xu H."/>
            <person name="Li N."/>
            <person name="Zhao C."/>
            <person name="Li S."/>
            <person name="Dong L."/>
            <person name="Huang Y."/>
            <person name="Li L."/>
            <person name="Xi Y."/>
            <person name="Qi Q."/>
            <person name="Li W."/>
            <person name="Zhang B."/>
            <person name="Hu W."/>
            <person name="Zhang Y."/>
            <person name="Tian X."/>
            <person name="Jiao Y."/>
            <person name="Liang X."/>
            <person name="Jin J."/>
            <person name="Gao L."/>
            <person name="Zheng W."/>
            <person name="Hao B."/>
            <person name="Liu S.-M."/>
            <person name="Wang W."/>
            <person name="Yuan L."/>
            <person name="Cao M."/>
            <person name="McDermott J."/>
            <person name="Samudrala R."/>
            <person name="Wang J."/>
            <person name="Wong G.K.-S."/>
            <person name="Yang H."/>
        </authorList>
    </citation>
    <scope>NUCLEOTIDE SEQUENCE [LARGE SCALE GENOMIC DNA]</scope>
    <source>
        <strain>cv. Nipponbare</strain>
    </source>
</reference>
<reference key="6">
    <citation type="journal article" date="2003" name="Science">
        <title>Collection, mapping, and annotation of over 28,000 cDNA clones from japonica rice.</title>
        <authorList>
            <consortium name="The rice full-length cDNA consortium"/>
        </authorList>
    </citation>
    <scope>NUCLEOTIDE SEQUENCE [LARGE SCALE MRNA]</scope>
    <source>
        <strain>cv. Nipponbare</strain>
    </source>
</reference>
<protein>
    <recommendedName>
        <fullName>Serine/threonine-protein phosphatase PP2A-4 catalytic subunit</fullName>
        <ecNumber>3.1.3.16</ecNumber>
    </recommendedName>
</protein>
<proteinExistence type="evidence at transcript level"/>
<dbReference type="EC" id="3.1.3.16"/>
<dbReference type="EMBL" id="DP000086">
    <property type="protein sequence ID" value="ABB47590.1"/>
    <property type="molecule type" value="Genomic_DNA"/>
</dbReference>
<dbReference type="EMBL" id="AP008216">
    <property type="protein sequence ID" value="BAF26492.1"/>
    <property type="molecule type" value="Genomic_DNA"/>
</dbReference>
<dbReference type="EMBL" id="AP014966">
    <property type="protein sequence ID" value="BAT10803.1"/>
    <property type="molecule type" value="Genomic_DNA"/>
</dbReference>
<dbReference type="EMBL" id="CM000147">
    <property type="protein sequence ID" value="EEE50943.1"/>
    <property type="molecule type" value="Genomic_DNA"/>
</dbReference>
<dbReference type="EMBL" id="AK099604">
    <property type="protein sequence ID" value="BAG94218.1"/>
    <property type="molecule type" value="mRNA"/>
</dbReference>
<dbReference type="RefSeq" id="XP_015615022.1">
    <property type="nucleotide sequence ID" value="XM_015759536.1"/>
</dbReference>
<dbReference type="SMR" id="A3C4N5"/>
<dbReference type="FunCoup" id="A3C4N5">
    <property type="interactions" value="128"/>
</dbReference>
<dbReference type="STRING" id="39947.A3C4N5"/>
<dbReference type="PaxDb" id="39947-A3C4N5"/>
<dbReference type="EnsemblPlants" id="Os10t0410600-02">
    <property type="protein sequence ID" value="Os10t0410600-02"/>
    <property type="gene ID" value="Os10g0410600"/>
</dbReference>
<dbReference type="Gramene" id="Os10t0410600-02">
    <property type="protein sequence ID" value="Os10t0410600-02"/>
    <property type="gene ID" value="Os10g0410600"/>
</dbReference>
<dbReference type="KEGG" id="dosa:Os10g0410600"/>
<dbReference type="eggNOG" id="KOG0371">
    <property type="taxonomic scope" value="Eukaryota"/>
</dbReference>
<dbReference type="HOGENOM" id="CLU_004962_8_1_1"/>
<dbReference type="InParanoid" id="A3C4N5"/>
<dbReference type="OMA" id="ICEPNIK"/>
<dbReference type="OrthoDB" id="1930084at2759"/>
<dbReference type="BRENDA" id="3.1.3.16">
    <property type="organism ID" value="4460"/>
</dbReference>
<dbReference type="PlantReactome" id="R-OSA-5632095">
    <property type="pathway name" value="Brassinosteroid signaling"/>
</dbReference>
<dbReference type="Proteomes" id="UP000000763">
    <property type="component" value="Chromosome 10"/>
</dbReference>
<dbReference type="Proteomes" id="UP000007752">
    <property type="component" value="Chromosome 10"/>
</dbReference>
<dbReference type="Proteomes" id="UP000059680">
    <property type="component" value="Chromosome 10"/>
</dbReference>
<dbReference type="ExpressionAtlas" id="A3C4N5">
    <property type="expression patterns" value="baseline and differential"/>
</dbReference>
<dbReference type="GO" id="GO:0005829">
    <property type="term" value="C:cytosol"/>
    <property type="evidence" value="ECO:0000318"/>
    <property type="project" value="GO_Central"/>
</dbReference>
<dbReference type="GO" id="GO:0005634">
    <property type="term" value="C:nucleus"/>
    <property type="evidence" value="ECO:0000318"/>
    <property type="project" value="GO_Central"/>
</dbReference>
<dbReference type="GO" id="GO:0046872">
    <property type="term" value="F:metal ion binding"/>
    <property type="evidence" value="ECO:0007669"/>
    <property type="project" value="UniProtKB-KW"/>
</dbReference>
<dbReference type="GO" id="GO:0004722">
    <property type="term" value="F:protein serine/threonine phosphatase activity"/>
    <property type="evidence" value="ECO:0000318"/>
    <property type="project" value="GO_Central"/>
</dbReference>
<dbReference type="GO" id="GO:0000278">
    <property type="term" value="P:mitotic cell cycle"/>
    <property type="evidence" value="ECO:0000318"/>
    <property type="project" value="GO_Central"/>
</dbReference>
<dbReference type="CDD" id="cd07415">
    <property type="entry name" value="MPP_PP2A_PP4_PP6"/>
    <property type="match status" value="1"/>
</dbReference>
<dbReference type="FunFam" id="3.60.21.10:FF:000003">
    <property type="entry name" value="Serine/threonine-protein phosphatase"/>
    <property type="match status" value="1"/>
</dbReference>
<dbReference type="Gene3D" id="3.60.21.10">
    <property type="match status" value="1"/>
</dbReference>
<dbReference type="InterPro" id="IPR004843">
    <property type="entry name" value="Calcineurin-like_PHP_ApaH"/>
</dbReference>
<dbReference type="InterPro" id="IPR029052">
    <property type="entry name" value="Metallo-depent_PP-like"/>
</dbReference>
<dbReference type="InterPro" id="IPR047129">
    <property type="entry name" value="PPA2-like"/>
</dbReference>
<dbReference type="InterPro" id="IPR006186">
    <property type="entry name" value="Ser/Thr-sp_prot-phosphatase"/>
</dbReference>
<dbReference type="PANTHER" id="PTHR45619">
    <property type="entry name" value="SERINE/THREONINE-PROTEIN PHOSPHATASE PP2A-RELATED"/>
    <property type="match status" value="1"/>
</dbReference>
<dbReference type="Pfam" id="PF00149">
    <property type="entry name" value="Metallophos"/>
    <property type="match status" value="1"/>
</dbReference>
<dbReference type="PRINTS" id="PR00114">
    <property type="entry name" value="STPHPHTASE"/>
</dbReference>
<dbReference type="SMART" id="SM00156">
    <property type="entry name" value="PP2Ac"/>
    <property type="match status" value="1"/>
</dbReference>
<dbReference type="SUPFAM" id="SSF56300">
    <property type="entry name" value="Metallo-dependent phosphatases"/>
    <property type="match status" value="1"/>
</dbReference>
<dbReference type="PROSITE" id="PS00125">
    <property type="entry name" value="SER_THR_PHOSPHATASE"/>
    <property type="match status" value="1"/>
</dbReference>
<feature type="chain" id="PRO_0000058864" description="Serine/threonine-protein phosphatase PP2A-4 catalytic subunit">
    <location>
        <begin position="1"/>
        <end position="314"/>
    </location>
</feature>
<feature type="active site" description="Proton donor" evidence="1">
    <location>
        <position position="123"/>
    </location>
</feature>
<feature type="binding site" evidence="1">
    <location>
        <position position="62"/>
    </location>
    <ligand>
        <name>Mn(2+)</name>
        <dbReference type="ChEBI" id="CHEBI:29035"/>
        <label>1</label>
    </ligand>
</feature>
<feature type="binding site" evidence="1">
    <location>
        <position position="64"/>
    </location>
    <ligand>
        <name>Mn(2+)</name>
        <dbReference type="ChEBI" id="CHEBI:29035"/>
        <label>1</label>
    </ligand>
</feature>
<feature type="binding site" evidence="1">
    <location>
        <position position="90"/>
    </location>
    <ligand>
        <name>Mn(2+)</name>
        <dbReference type="ChEBI" id="CHEBI:29035"/>
        <label>1</label>
    </ligand>
</feature>
<feature type="binding site" evidence="1">
    <location>
        <position position="90"/>
    </location>
    <ligand>
        <name>Mn(2+)</name>
        <dbReference type="ChEBI" id="CHEBI:29035"/>
        <label>2</label>
    </ligand>
</feature>
<feature type="binding site" evidence="1">
    <location>
        <position position="122"/>
    </location>
    <ligand>
        <name>Mn(2+)</name>
        <dbReference type="ChEBI" id="CHEBI:29035"/>
        <label>2</label>
    </ligand>
</feature>
<feature type="binding site" evidence="1">
    <location>
        <position position="172"/>
    </location>
    <ligand>
        <name>Mn(2+)</name>
        <dbReference type="ChEBI" id="CHEBI:29035"/>
        <label>2</label>
    </ligand>
</feature>
<feature type="binding site" evidence="1">
    <location>
        <position position="246"/>
    </location>
    <ligand>
        <name>Mn(2+)</name>
        <dbReference type="ChEBI" id="CHEBI:29035"/>
        <label>2</label>
    </ligand>
</feature>